<dbReference type="EC" id="2.7.4.3" evidence="1"/>
<dbReference type="EMBL" id="AE001437">
    <property type="protein sequence ID" value="AAK81051.1"/>
    <property type="molecule type" value="Genomic_DNA"/>
</dbReference>
<dbReference type="PIR" id="H97282">
    <property type="entry name" value="H97282"/>
</dbReference>
<dbReference type="RefSeq" id="NP_349711.1">
    <property type="nucleotide sequence ID" value="NC_003030.1"/>
</dbReference>
<dbReference type="RefSeq" id="WP_010966391.1">
    <property type="nucleotide sequence ID" value="NC_003030.1"/>
</dbReference>
<dbReference type="SMR" id="Q97EJ9"/>
<dbReference type="STRING" id="272562.CA_C3112"/>
<dbReference type="KEGG" id="cac:CA_C3112"/>
<dbReference type="PATRIC" id="fig|272562.8.peg.3295"/>
<dbReference type="eggNOG" id="COG0563">
    <property type="taxonomic scope" value="Bacteria"/>
</dbReference>
<dbReference type="HOGENOM" id="CLU_032354_1_2_9"/>
<dbReference type="OrthoDB" id="9805030at2"/>
<dbReference type="UniPathway" id="UPA00588">
    <property type="reaction ID" value="UER00649"/>
</dbReference>
<dbReference type="Proteomes" id="UP000000814">
    <property type="component" value="Chromosome"/>
</dbReference>
<dbReference type="GO" id="GO:0005737">
    <property type="term" value="C:cytoplasm"/>
    <property type="evidence" value="ECO:0007669"/>
    <property type="project" value="UniProtKB-SubCell"/>
</dbReference>
<dbReference type="GO" id="GO:0004017">
    <property type="term" value="F:adenylate kinase activity"/>
    <property type="evidence" value="ECO:0007669"/>
    <property type="project" value="UniProtKB-UniRule"/>
</dbReference>
<dbReference type="GO" id="GO:0005524">
    <property type="term" value="F:ATP binding"/>
    <property type="evidence" value="ECO:0007669"/>
    <property type="project" value="UniProtKB-UniRule"/>
</dbReference>
<dbReference type="GO" id="GO:0008270">
    <property type="term" value="F:zinc ion binding"/>
    <property type="evidence" value="ECO:0007669"/>
    <property type="project" value="UniProtKB-UniRule"/>
</dbReference>
<dbReference type="GO" id="GO:0044209">
    <property type="term" value="P:AMP salvage"/>
    <property type="evidence" value="ECO:0007669"/>
    <property type="project" value="UniProtKB-UniRule"/>
</dbReference>
<dbReference type="CDD" id="cd01428">
    <property type="entry name" value="ADK"/>
    <property type="match status" value="1"/>
</dbReference>
<dbReference type="FunFam" id="3.40.50.300:FF:000106">
    <property type="entry name" value="Adenylate kinase mitochondrial"/>
    <property type="match status" value="1"/>
</dbReference>
<dbReference type="Gene3D" id="3.40.50.300">
    <property type="entry name" value="P-loop containing nucleotide triphosphate hydrolases"/>
    <property type="match status" value="1"/>
</dbReference>
<dbReference type="HAMAP" id="MF_00235">
    <property type="entry name" value="Adenylate_kinase_Adk"/>
    <property type="match status" value="1"/>
</dbReference>
<dbReference type="InterPro" id="IPR006259">
    <property type="entry name" value="Adenyl_kin_sub"/>
</dbReference>
<dbReference type="InterPro" id="IPR000850">
    <property type="entry name" value="Adenylat/UMP-CMP_kin"/>
</dbReference>
<dbReference type="InterPro" id="IPR033690">
    <property type="entry name" value="Adenylat_kinase_CS"/>
</dbReference>
<dbReference type="InterPro" id="IPR007862">
    <property type="entry name" value="Adenylate_kinase_lid-dom"/>
</dbReference>
<dbReference type="InterPro" id="IPR027417">
    <property type="entry name" value="P-loop_NTPase"/>
</dbReference>
<dbReference type="NCBIfam" id="TIGR01351">
    <property type="entry name" value="adk"/>
    <property type="match status" value="1"/>
</dbReference>
<dbReference type="NCBIfam" id="NF001380">
    <property type="entry name" value="PRK00279.1-2"/>
    <property type="match status" value="1"/>
</dbReference>
<dbReference type="NCBIfam" id="NF001381">
    <property type="entry name" value="PRK00279.1-3"/>
    <property type="match status" value="1"/>
</dbReference>
<dbReference type="NCBIfam" id="NF011100">
    <property type="entry name" value="PRK14527.1"/>
    <property type="match status" value="1"/>
</dbReference>
<dbReference type="PANTHER" id="PTHR23359">
    <property type="entry name" value="NUCLEOTIDE KINASE"/>
    <property type="match status" value="1"/>
</dbReference>
<dbReference type="Pfam" id="PF00406">
    <property type="entry name" value="ADK"/>
    <property type="match status" value="1"/>
</dbReference>
<dbReference type="Pfam" id="PF05191">
    <property type="entry name" value="ADK_lid"/>
    <property type="match status" value="1"/>
</dbReference>
<dbReference type="PRINTS" id="PR00094">
    <property type="entry name" value="ADENYLTKNASE"/>
</dbReference>
<dbReference type="SUPFAM" id="SSF52540">
    <property type="entry name" value="P-loop containing nucleoside triphosphate hydrolases"/>
    <property type="match status" value="1"/>
</dbReference>
<dbReference type="PROSITE" id="PS00113">
    <property type="entry name" value="ADENYLATE_KINASE"/>
    <property type="match status" value="1"/>
</dbReference>
<reference key="1">
    <citation type="journal article" date="2001" name="J. Bacteriol.">
        <title>Genome sequence and comparative analysis of the solvent-producing bacterium Clostridium acetobutylicum.</title>
        <authorList>
            <person name="Noelling J."/>
            <person name="Breton G."/>
            <person name="Omelchenko M.V."/>
            <person name="Makarova K.S."/>
            <person name="Zeng Q."/>
            <person name="Gibson R."/>
            <person name="Lee H.M."/>
            <person name="Dubois J."/>
            <person name="Qiu D."/>
            <person name="Hitti J."/>
            <person name="Wolf Y.I."/>
            <person name="Tatusov R.L."/>
            <person name="Sabathe F."/>
            <person name="Doucette-Stamm L.A."/>
            <person name="Soucaille P."/>
            <person name="Daly M.J."/>
            <person name="Bennett G.N."/>
            <person name="Koonin E.V."/>
            <person name="Smith D.R."/>
        </authorList>
    </citation>
    <scope>NUCLEOTIDE SEQUENCE [LARGE SCALE GENOMIC DNA]</scope>
    <source>
        <strain>ATCC 824 / DSM 792 / JCM 1419 / IAM 19013 / LMG 5710 / NBRC 13948 / NRRL B-527 / VKM B-1787 / 2291 / W</strain>
    </source>
</reference>
<comment type="function">
    <text evidence="1">Catalyzes the reversible transfer of the terminal phosphate group between ATP and AMP. Plays an important role in cellular energy homeostasis and in adenine nucleotide metabolism.</text>
</comment>
<comment type="catalytic activity">
    <reaction evidence="1">
        <text>AMP + ATP = 2 ADP</text>
        <dbReference type="Rhea" id="RHEA:12973"/>
        <dbReference type="ChEBI" id="CHEBI:30616"/>
        <dbReference type="ChEBI" id="CHEBI:456215"/>
        <dbReference type="ChEBI" id="CHEBI:456216"/>
        <dbReference type="EC" id="2.7.4.3"/>
    </reaction>
</comment>
<comment type="pathway">
    <text evidence="1">Purine metabolism; AMP biosynthesis via salvage pathway; AMP from ADP: step 1/1.</text>
</comment>
<comment type="subunit">
    <text evidence="1">Monomer.</text>
</comment>
<comment type="subcellular location">
    <subcellularLocation>
        <location evidence="1">Cytoplasm</location>
    </subcellularLocation>
</comment>
<comment type="domain">
    <text evidence="1">Consists of three domains, a large central CORE domain and two small peripheral domains, NMPbind and LID, which undergo movements during catalysis. The LID domain closes over the site of phosphoryl transfer upon ATP binding. Assembling and dissambling the active center during each catalytic cycle provides an effective means to prevent ATP hydrolysis. Some bacteria have evolved a zinc-coordinating structure that stabilizes the LID domain.</text>
</comment>
<comment type="similarity">
    <text evidence="1">Belongs to the adenylate kinase family.</text>
</comment>
<proteinExistence type="inferred from homology"/>
<accession>Q97EJ9</accession>
<feature type="chain" id="PRO_0000158757" description="Adenylate kinase">
    <location>
        <begin position="1"/>
        <end position="215"/>
    </location>
</feature>
<feature type="region of interest" description="NMP" evidence="1">
    <location>
        <begin position="30"/>
        <end position="59"/>
    </location>
</feature>
<feature type="region of interest" description="LID" evidence="1">
    <location>
        <begin position="126"/>
        <end position="163"/>
    </location>
</feature>
<feature type="binding site" evidence="1">
    <location>
        <begin position="10"/>
        <end position="15"/>
    </location>
    <ligand>
        <name>ATP</name>
        <dbReference type="ChEBI" id="CHEBI:30616"/>
    </ligand>
</feature>
<feature type="binding site" evidence="1">
    <location>
        <position position="31"/>
    </location>
    <ligand>
        <name>AMP</name>
        <dbReference type="ChEBI" id="CHEBI:456215"/>
    </ligand>
</feature>
<feature type="binding site" evidence="1">
    <location>
        <position position="36"/>
    </location>
    <ligand>
        <name>AMP</name>
        <dbReference type="ChEBI" id="CHEBI:456215"/>
    </ligand>
</feature>
<feature type="binding site" evidence="1">
    <location>
        <begin position="57"/>
        <end position="59"/>
    </location>
    <ligand>
        <name>AMP</name>
        <dbReference type="ChEBI" id="CHEBI:456215"/>
    </ligand>
</feature>
<feature type="binding site" evidence="1">
    <location>
        <begin position="85"/>
        <end position="88"/>
    </location>
    <ligand>
        <name>AMP</name>
        <dbReference type="ChEBI" id="CHEBI:456215"/>
    </ligand>
</feature>
<feature type="binding site" evidence="1">
    <location>
        <position position="92"/>
    </location>
    <ligand>
        <name>AMP</name>
        <dbReference type="ChEBI" id="CHEBI:456215"/>
    </ligand>
</feature>
<feature type="binding site" evidence="1">
    <location>
        <position position="127"/>
    </location>
    <ligand>
        <name>ATP</name>
        <dbReference type="ChEBI" id="CHEBI:30616"/>
    </ligand>
</feature>
<feature type="binding site" evidence="1">
    <location>
        <position position="130"/>
    </location>
    <ligand>
        <name>Zn(2+)</name>
        <dbReference type="ChEBI" id="CHEBI:29105"/>
        <note>structural</note>
    </ligand>
</feature>
<feature type="binding site" evidence="1">
    <location>
        <position position="133"/>
    </location>
    <ligand>
        <name>Zn(2+)</name>
        <dbReference type="ChEBI" id="CHEBI:29105"/>
        <note>structural</note>
    </ligand>
</feature>
<feature type="binding site" evidence="1">
    <location>
        <begin position="136"/>
        <end position="137"/>
    </location>
    <ligand>
        <name>ATP</name>
        <dbReference type="ChEBI" id="CHEBI:30616"/>
    </ligand>
</feature>
<feature type="binding site" evidence="1">
    <location>
        <position position="150"/>
    </location>
    <ligand>
        <name>Zn(2+)</name>
        <dbReference type="ChEBI" id="CHEBI:29105"/>
        <note>structural</note>
    </ligand>
</feature>
<feature type="binding site" evidence="1">
    <location>
        <position position="153"/>
    </location>
    <ligand>
        <name>Zn(2+)</name>
        <dbReference type="ChEBI" id="CHEBI:29105"/>
        <note>structural</note>
    </ligand>
</feature>
<feature type="binding site" evidence="1">
    <location>
        <position position="160"/>
    </location>
    <ligand>
        <name>AMP</name>
        <dbReference type="ChEBI" id="CHEBI:456215"/>
    </ligand>
</feature>
<feature type="binding site" evidence="1">
    <location>
        <position position="171"/>
    </location>
    <ligand>
        <name>AMP</name>
        <dbReference type="ChEBI" id="CHEBI:456215"/>
    </ligand>
</feature>
<feature type="binding site" evidence="1">
    <location>
        <position position="199"/>
    </location>
    <ligand>
        <name>ATP</name>
        <dbReference type="ChEBI" id="CHEBI:30616"/>
    </ligand>
</feature>
<evidence type="ECO:0000255" key="1">
    <source>
        <dbReference type="HAMAP-Rule" id="MF_00235"/>
    </source>
</evidence>
<protein>
    <recommendedName>
        <fullName evidence="1">Adenylate kinase</fullName>
        <shortName evidence="1">AK</shortName>
        <ecNumber evidence="1">2.7.4.3</ecNumber>
    </recommendedName>
    <alternativeName>
        <fullName evidence="1">ATP-AMP transphosphorylase</fullName>
    </alternativeName>
    <alternativeName>
        <fullName evidence="1">ATP:AMP phosphotransferase</fullName>
    </alternativeName>
    <alternativeName>
        <fullName evidence="1">Adenylate monophosphate kinase</fullName>
    </alternativeName>
</protein>
<keyword id="KW-0067">ATP-binding</keyword>
<keyword id="KW-0963">Cytoplasm</keyword>
<keyword id="KW-0418">Kinase</keyword>
<keyword id="KW-0479">Metal-binding</keyword>
<keyword id="KW-0545">Nucleotide biosynthesis</keyword>
<keyword id="KW-0547">Nucleotide-binding</keyword>
<keyword id="KW-1185">Reference proteome</keyword>
<keyword id="KW-0808">Transferase</keyword>
<keyword id="KW-0862">Zinc</keyword>
<gene>
    <name evidence="1" type="primary">adk</name>
    <name type="ordered locus">CA_C3112</name>
</gene>
<sequence length="215" mass="23945">MKIILLGPPGAGKGTQAKLISSEFSIPHISTGDIFRANISGKTELGMKAKGYMDKGLLVPDELTIDIVKDRISKDDCKSGFLLDGFPRTVNQAEALDKFLVGRKEKIDCALLIDVPREKIFNRMTGRRVCSKCGASYHIEYNPTKVEGICDLCGSPVVQRKDDSEDTVKERLDVYDRQTEPLVVYYRNEAVLKSVDGTQDIDKVFEDIRNVLGEI</sequence>
<name>KAD_CLOAB</name>
<organism>
    <name type="scientific">Clostridium acetobutylicum (strain ATCC 824 / DSM 792 / JCM 1419 / IAM 19013 / LMG 5710 / NBRC 13948 / NRRL B-527 / VKM B-1787 / 2291 / W)</name>
    <dbReference type="NCBI Taxonomy" id="272562"/>
    <lineage>
        <taxon>Bacteria</taxon>
        <taxon>Bacillati</taxon>
        <taxon>Bacillota</taxon>
        <taxon>Clostridia</taxon>
        <taxon>Eubacteriales</taxon>
        <taxon>Clostridiaceae</taxon>
        <taxon>Clostridium</taxon>
    </lineage>
</organism>